<organism>
    <name type="scientific">Panchlora viridis</name>
    <name type="common">Cockroach</name>
    <dbReference type="NCBI Taxonomy" id="344693"/>
    <lineage>
        <taxon>Eukaryota</taxon>
        <taxon>Metazoa</taxon>
        <taxon>Ecdysozoa</taxon>
        <taxon>Arthropoda</taxon>
        <taxon>Hexapoda</taxon>
        <taxon>Insecta</taxon>
        <taxon>Pterygota</taxon>
        <taxon>Neoptera</taxon>
        <taxon>Polyneoptera</taxon>
        <taxon>Dictyoptera</taxon>
        <taxon>Blattodea</taxon>
        <taxon>Blaberoidea</taxon>
        <taxon>Blaberidae</taxon>
        <taxon>Panchlorinae</taxon>
        <taxon>Panchlora</taxon>
    </lineage>
</organism>
<proteinExistence type="evidence at protein level"/>
<evidence type="ECO:0000250" key="1">
    <source>
        <dbReference type="UniProtKB" id="P41493"/>
    </source>
</evidence>
<evidence type="ECO:0000255" key="2"/>
<evidence type="ECO:0000269" key="3">
    <source>
    </source>
</evidence>
<evidence type="ECO:0000303" key="4">
    <source>
    </source>
</evidence>
<evidence type="ECO:0000305" key="5"/>
<feature type="peptide" id="PRO_0000378889" description="Sulfakinin-1" evidence="3">
    <location>
        <begin position="1"/>
        <end position="11"/>
    </location>
</feature>
<feature type="modified residue" description="Sulfotyrosine" evidence="1">
    <location>
        <position position="6"/>
    </location>
</feature>
<feature type="modified residue" description="Phenylalanine amide" evidence="3">
    <location>
        <position position="11"/>
    </location>
</feature>
<protein>
    <recommendedName>
        <fullName evidence="4">Sulfakinin-1</fullName>
        <shortName evidence="4">PanVi-SK-1</shortName>
    </recommendedName>
</protein>
<keyword id="KW-0027">Amidation</keyword>
<keyword id="KW-0903">Direct protein sequencing</keyword>
<keyword id="KW-0372">Hormone</keyword>
<keyword id="KW-0527">Neuropeptide</keyword>
<keyword id="KW-0964">Secreted</keyword>
<keyword id="KW-0765">Sulfation</keyword>
<dbReference type="GO" id="GO:0005576">
    <property type="term" value="C:extracellular region"/>
    <property type="evidence" value="ECO:0007669"/>
    <property type="project" value="UniProtKB-SubCell"/>
</dbReference>
<dbReference type="GO" id="GO:0005179">
    <property type="term" value="F:hormone activity"/>
    <property type="evidence" value="ECO:0007669"/>
    <property type="project" value="UniProtKB-KW"/>
</dbReference>
<dbReference type="GO" id="GO:0007218">
    <property type="term" value="P:neuropeptide signaling pathway"/>
    <property type="evidence" value="ECO:0007669"/>
    <property type="project" value="UniProtKB-KW"/>
</dbReference>
<dbReference type="InterPro" id="IPR013152">
    <property type="entry name" value="Gastrin/cholecystokinin_CS"/>
</dbReference>
<dbReference type="InterPro" id="IPR013259">
    <property type="entry name" value="Sulfakinin"/>
</dbReference>
<dbReference type="Pfam" id="PF08257">
    <property type="entry name" value="Sulfakinin"/>
    <property type="match status" value="1"/>
</dbReference>
<dbReference type="PROSITE" id="PS00259">
    <property type="entry name" value="GASTRIN"/>
    <property type="match status" value="1"/>
</dbReference>
<reference evidence="5" key="1">
    <citation type="journal article" date="2009" name="BMC Evol. Biol.">
        <title>A proteomic approach for studying insect phylogeny: CAPA peptides of ancient insect taxa (Dictyoptera, Blattoptera) as a test case.</title>
        <authorList>
            <person name="Roth S."/>
            <person name="Fromm B."/>
            <person name="Gaede G."/>
            <person name="Predel R."/>
        </authorList>
    </citation>
    <scope>PROTEIN SEQUENCE</scope>
    <scope>AMIDATION AT PHE-11</scope>
    <source>
        <tissue evidence="3">Corpora cardiaca</tissue>
    </source>
</reference>
<comment type="function">
    <text evidence="1">Myotropic peptide.</text>
</comment>
<comment type="subcellular location">
    <subcellularLocation>
        <location evidence="5">Secreted</location>
    </subcellularLocation>
</comment>
<comment type="similarity">
    <text evidence="2">Belongs to the gastrin/cholecystokinin family.</text>
</comment>
<accession>P85854</accession>
<sequence length="11" mass="1459">EQFEDYGHMRF</sequence>
<name>SK1_PANVI</name>